<accession>A4FAC5</accession>
<comment type="function">
    <text evidence="1">Catalyzes the transfer of the phosphoribosyl group of 5-phosphorylribose-1-pyrophosphate (PRPP) to anthranilate to yield N-(5'-phosphoribosyl)-anthranilate (PRA).</text>
</comment>
<comment type="catalytic activity">
    <reaction evidence="1">
        <text>N-(5-phospho-beta-D-ribosyl)anthranilate + diphosphate = 5-phospho-alpha-D-ribose 1-diphosphate + anthranilate</text>
        <dbReference type="Rhea" id="RHEA:11768"/>
        <dbReference type="ChEBI" id="CHEBI:16567"/>
        <dbReference type="ChEBI" id="CHEBI:18277"/>
        <dbReference type="ChEBI" id="CHEBI:33019"/>
        <dbReference type="ChEBI" id="CHEBI:58017"/>
        <dbReference type="EC" id="2.4.2.18"/>
    </reaction>
</comment>
<comment type="cofactor">
    <cofactor evidence="1">
        <name>Mg(2+)</name>
        <dbReference type="ChEBI" id="CHEBI:18420"/>
    </cofactor>
    <text evidence="1">Binds 2 magnesium ions per monomer.</text>
</comment>
<comment type="pathway">
    <text evidence="1">Amino-acid biosynthesis; L-tryptophan biosynthesis; L-tryptophan from chorismate: step 2/5.</text>
</comment>
<comment type="subunit">
    <text evidence="1">Homodimer.</text>
</comment>
<comment type="similarity">
    <text evidence="1">Belongs to the anthranilate phosphoribosyltransferase family.</text>
</comment>
<sequence>MGTMAGSWAALLGHLVAGNDLSAEDTAWAMDLVMTGEATPARVAAFVVALRAKGETPAEVRGMADAMLSHSRPLEIRRRAVDIVGTGGDRSGSVNISTMASIVVAAAGVPVVKHGNRAASSKCGTADVLEALGVAIDLPPEGVRRCVEDLGIGFCFAPVFHPAMRHAAGPRREIGIPTAFNVLGPLTNPARPSAGLIGCGDQRMAPVMAEVFAARGGSVLLVRGDDGMDEITTTTTTTVWVVQGGTVTEESIDPAEFGIGYSTPAELQGGDAEVNAEVVRRLVAGEAGPVRDAVLLNAAGALAAFEGPGTDLRGRLGADVERVAAAIDSGAAADLLDRWAKRSTEIMRESE</sequence>
<feature type="chain" id="PRO_0000325460" description="Anthranilate phosphoribosyltransferase">
    <location>
        <begin position="1"/>
        <end position="351"/>
    </location>
</feature>
<feature type="binding site" evidence="1">
    <location>
        <position position="85"/>
    </location>
    <ligand>
        <name>5-phospho-alpha-D-ribose 1-diphosphate</name>
        <dbReference type="ChEBI" id="CHEBI:58017"/>
    </ligand>
</feature>
<feature type="binding site" evidence="1">
    <location>
        <position position="85"/>
    </location>
    <ligand>
        <name>anthranilate</name>
        <dbReference type="ChEBI" id="CHEBI:16567"/>
        <label>1</label>
    </ligand>
</feature>
<feature type="binding site" evidence="1">
    <location>
        <begin position="88"/>
        <end position="89"/>
    </location>
    <ligand>
        <name>5-phospho-alpha-D-ribose 1-diphosphate</name>
        <dbReference type="ChEBI" id="CHEBI:58017"/>
    </ligand>
</feature>
<feature type="binding site" evidence="1">
    <location>
        <position position="93"/>
    </location>
    <ligand>
        <name>5-phospho-alpha-D-ribose 1-diphosphate</name>
        <dbReference type="ChEBI" id="CHEBI:58017"/>
    </ligand>
</feature>
<feature type="binding site" evidence="1">
    <location>
        <begin position="95"/>
        <end position="98"/>
    </location>
    <ligand>
        <name>5-phospho-alpha-D-ribose 1-diphosphate</name>
        <dbReference type="ChEBI" id="CHEBI:58017"/>
    </ligand>
</feature>
<feature type="binding site" evidence="1">
    <location>
        <position position="97"/>
    </location>
    <ligand>
        <name>Mg(2+)</name>
        <dbReference type="ChEBI" id="CHEBI:18420"/>
        <label>1</label>
    </ligand>
</feature>
<feature type="binding site" evidence="1">
    <location>
        <begin position="113"/>
        <end position="121"/>
    </location>
    <ligand>
        <name>5-phospho-alpha-D-ribose 1-diphosphate</name>
        <dbReference type="ChEBI" id="CHEBI:58017"/>
    </ligand>
</feature>
<feature type="binding site" evidence="1">
    <location>
        <position position="116"/>
    </location>
    <ligand>
        <name>anthranilate</name>
        <dbReference type="ChEBI" id="CHEBI:16567"/>
        <label>1</label>
    </ligand>
</feature>
<feature type="binding site" evidence="1">
    <location>
        <position position="125"/>
    </location>
    <ligand>
        <name>5-phospho-alpha-D-ribose 1-diphosphate</name>
        <dbReference type="ChEBI" id="CHEBI:58017"/>
    </ligand>
</feature>
<feature type="binding site" evidence="1">
    <location>
        <position position="171"/>
    </location>
    <ligand>
        <name>anthranilate</name>
        <dbReference type="ChEBI" id="CHEBI:16567"/>
        <label>2</label>
    </ligand>
</feature>
<feature type="binding site" evidence="1">
    <location>
        <position position="229"/>
    </location>
    <ligand>
        <name>Mg(2+)</name>
        <dbReference type="ChEBI" id="CHEBI:18420"/>
        <label>2</label>
    </ligand>
</feature>
<feature type="binding site" evidence="1">
    <location>
        <position position="230"/>
    </location>
    <ligand>
        <name>Mg(2+)</name>
        <dbReference type="ChEBI" id="CHEBI:18420"/>
        <label>1</label>
    </ligand>
</feature>
<feature type="binding site" evidence="1">
    <location>
        <position position="230"/>
    </location>
    <ligand>
        <name>Mg(2+)</name>
        <dbReference type="ChEBI" id="CHEBI:18420"/>
        <label>2</label>
    </ligand>
</feature>
<name>TRPD_SACEN</name>
<proteinExistence type="inferred from homology"/>
<keyword id="KW-0028">Amino-acid biosynthesis</keyword>
<keyword id="KW-0057">Aromatic amino acid biosynthesis</keyword>
<keyword id="KW-0328">Glycosyltransferase</keyword>
<keyword id="KW-0460">Magnesium</keyword>
<keyword id="KW-0479">Metal-binding</keyword>
<keyword id="KW-1185">Reference proteome</keyword>
<keyword id="KW-0808">Transferase</keyword>
<keyword id="KW-0822">Tryptophan biosynthesis</keyword>
<reference key="1">
    <citation type="journal article" date="2007" name="Nat. Biotechnol.">
        <title>Complete genome sequence of the erythromycin-producing bacterium Saccharopolyspora erythraea NRRL23338.</title>
        <authorList>
            <person name="Oliynyk M."/>
            <person name="Samborskyy M."/>
            <person name="Lester J.B."/>
            <person name="Mironenko T."/>
            <person name="Scott N."/>
            <person name="Dickens S."/>
            <person name="Haydock S.F."/>
            <person name="Leadlay P.F."/>
        </authorList>
    </citation>
    <scope>NUCLEOTIDE SEQUENCE [LARGE SCALE GENOMIC DNA]</scope>
    <source>
        <strain>ATCC 11635 / DSM 40517 / JCM 4748 / NBRC 13426 / NCIMB 8594 / NRRL 2338</strain>
    </source>
</reference>
<organism>
    <name type="scientific">Saccharopolyspora erythraea (strain ATCC 11635 / DSM 40517 / JCM 4748 / NBRC 13426 / NCIMB 8594 / NRRL 2338)</name>
    <dbReference type="NCBI Taxonomy" id="405948"/>
    <lineage>
        <taxon>Bacteria</taxon>
        <taxon>Bacillati</taxon>
        <taxon>Actinomycetota</taxon>
        <taxon>Actinomycetes</taxon>
        <taxon>Pseudonocardiales</taxon>
        <taxon>Pseudonocardiaceae</taxon>
        <taxon>Saccharopolyspora</taxon>
    </lineage>
</organism>
<gene>
    <name evidence="1" type="primary">trpD</name>
    <name type="ordered locus">SACE_1681</name>
</gene>
<evidence type="ECO:0000255" key="1">
    <source>
        <dbReference type="HAMAP-Rule" id="MF_00211"/>
    </source>
</evidence>
<dbReference type="EC" id="2.4.2.18" evidence="1"/>
<dbReference type="EMBL" id="AM420293">
    <property type="protein sequence ID" value="CAM01000.1"/>
    <property type="molecule type" value="Genomic_DNA"/>
</dbReference>
<dbReference type="SMR" id="A4FAC5"/>
<dbReference type="STRING" id="405948.SACE_1681"/>
<dbReference type="KEGG" id="sen:SACE_1681"/>
<dbReference type="eggNOG" id="COG0547">
    <property type="taxonomic scope" value="Bacteria"/>
</dbReference>
<dbReference type="HOGENOM" id="CLU_034315_4_1_11"/>
<dbReference type="UniPathway" id="UPA00035">
    <property type="reaction ID" value="UER00041"/>
</dbReference>
<dbReference type="Proteomes" id="UP000006728">
    <property type="component" value="Chromosome"/>
</dbReference>
<dbReference type="GO" id="GO:0005829">
    <property type="term" value="C:cytosol"/>
    <property type="evidence" value="ECO:0007669"/>
    <property type="project" value="TreeGrafter"/>
</dbReference>
<dbReference type="GO" id="GO:0004048">
    <property type="term" value="F:anthranilate phosphoribosyltransferase activity"/>
    <property type="evidence" value="ECO:0007669"/>
    <property type="project" value="UniProtKB-UniRule"/>
</dbReference>
<dbReference type="GO" id="GO:0000287">
    <property type="term" value="F:magnesium ion binding"/>
    <property type="evidence" value="ECO:0007669"/>
    <property type="project" value="UniProtKB-UniRule"/>
</dbReference>
<dbReference type="GO" id="GO:0000162">
    <property type="term" value="P:L-tryptophan biosynthetic process"/>
    <property type="evidence" value="ECO:0007669"/>
    <property type="project" value="UniProtKB-UniRule"/>
</dbReference>
<dbReference type="FunFam" id="3.40.1030.10:FF:000002">
    <property type="entry name" value="Anthranilate phosphoribosyltransferase"/>
    <property type="match status" value="1"/>
</dbReference>
<dbReference type="Gene3D" id="3.40.1030.10">
    <property type="entry name" value="Nucleoside phosphorylase/phosphoribosyltransferase catalytic domain"/>
    <property type="match status" value="1"/>
</dbReference>
<dbReference type="Gene3D" id="1.20.970.10">
    <property type="entry name" value="Transferase, Pyrimidine Nucleoside Phosphorylase, Chain C"/>
    <property type="match status" value="1"/>
</dbReference>
<dbReference type="HAMAP" id="MF_00211">
    <property type="entry name" value="TrpD"/>
    <property type="match status" value="1"/>
</dbReference>
<dbReference type="InterPro" id="IPR005940">
    <property type="entry name" value="Anthranilate_Pribosyl_Tfrase"/>
</dbReference>
<dbReference type="InterPro" id="IPR000312">
    <property type="entry name" value="Glycosyl_Trfase_fam3"/>
</dbReference>
<dbReference type="InterPro" id="IPR017459">
    <property type="entry name" value="Glycosyl_Trfase_fam3_N_dom"/>
</dbReference>
<dbReference type="InterPro" id="IPR036320">
    <property type="entry name" value="Glycosyl_Trfase_fam3_N_dom_sf"/>
</dbReference>
<dbReference type="InterPro" id="IPR035902">
    <property type="entry name" value="Nuc_phospho_transferase"/>
</dbReference>
<dbReference type="NCBIfam" id="TIGR01245">
    <property type="entry name" value="trpD"/>
    <property type="match status" value="1"/>
</dbReference>
<dbReference type="PANTHER" id="PTHR43285">
    <property type="entry name" value="ANTHRANILATE PHOSPHORIBOSYLTRANSFERASE"/>
    <property type="match status" value="1"/>
</dbReference>
<dbReference type="PANTHER" id="PTHR43285:SF2">
    <property type="entry name" value="ANTHRANILATE PHOSPHORIBOSYLTRANSFERASE"/>
    <property type="match status" value="1"/>
</dbReference>
<dbReference type="Pfam" id="PF02885">
    <property type="entry name" value="Glycos_trans_3N"/>
    <property type="match status" value="1"/>
</dbReference>
<dbReference type="Pfam" id="PF00591">
    <property type="entry name" value="Glycos_transf_3"/>
    <property type="match status" value="1"/>
</dbReference>
<dbReference type="SUPFAM" id="SSF52418">
    <property type="entry name" value="Nucleoside phosphorylase/phosphoribosyltransferase catalytic domain"/>
    <property type="match status" value="1"/>
</dbReference>
<dbReference type="SUPFAM" id="SSF47648">
    <property type="entry name" value="Nucleoside phosphorylase/phosphoribosyltransferase N-terminal domain"/>
    <property type="match status" value="1"/>
</dbReference>
<protein>
    <recommendedName>
        <fullName evidence="1">Anthranilate phosphoribosyltransferase</fullName>
        <ecNumber evidence="1">2.4.2.18</ecNumber>
    </recommendedName>
</protein>